<proteinExistence type="evidence at protein level"/>
<reference key="1">
    <citation type="journal article" date="1987" name="Proc. Natl. Acad. Sci. U.S.A.">
        <title>Cloning and sequencing of human intestinal alkaline phosphatase cDNA.</title>
        <authorList>
            <person name="Berger J."/>
            <person name="Garattini E."/>
            <person name="Hua J.-C."/>
            <person name="Udenfriend S."/>
        </authorList>
    </citation>
    <scope>NUCLEOTIDE SEQUENCE [MRNA]</scope>
    <scope>PARTIAL PROTEIN SEQUENCE</scope>
</reference>
<reference key="2">
    <citation type="journal article" date="1987" name="Proc. Natl. Acad. Sci. U.S.A.">
        <title>Nucleotide and amino acid sequences of human intestinal alkaline phosphatase: close homology to placental alkaline phosphatase.</title>
        <authorList>
            <person name="Henthorn P.S."/>
            <person name="Raducha M."/>
            <person name="Edwards Y.H."/>
            <person name="Weiss M.J."/>
            <person name="Slaughter C."/>
            <person name="Lafferty M.A."/>
            <person name="Harris H."/>
        </authorList>
    </citation>
    <scope>NUCLEOTIDE SEQUENCE [MRNA]</scope>
</reference>
<reference key="3">
    <citation type="journal article" date="1988" name="J. Biol. Chem.">
        <title>Sequence and characterization of the human intestinal alkaline phosphatase gene.</title>
        <authorList>
            <person name="Henthorn P.S."/>
            <person name="Raducha M."/>
            <person name="Kadesch T."/>
            <person name="Weiss M.J."/>
            <person name="Harris H."/>
        </authorList>
    </citation>
    <scope>NUCLEOTIDE SEQUENCE [GENOMIC DNA]</scope>
</reference>
<reference key="4">
    <citation type="journal article" date="2004" name="Nat. Genet.">
        <title>Complete sequencing and characterization of 21,243 full-length human cDNAs.</title>
        <authorList>
            <person name="Ota T."/>
            <person name="Suzuki Y."/>
            <person name="Nishikawa T."/>
            <person name="Otsuki T."/>
            <person name="Sugiyama T."/>
            <person name="Irie R."/>
            <person name="Wakamatsu A."/>
            <person name="Hayashi K."/>
            <person name="Sato H."/>
            <person name="Nagai K."/>
            <person name="Kimura K."/>
            <person name="Makita H."/>
            <person name="Sekine M."/>
            <person name="Obayashi M."/>
            <person name="Nishi T."/>
            <person name="Shibahara T."/>
            <person name="Tanaka T."/>
            <person name="Ishii S."/>
            <person name="Yamamoto J."/>
            <person name="Saito K."/>
            <person name="Kawai Y."/>
            <person name="Isono Y."/>
            <person name="Nakamura Y."/>
            <person name="Nagahari K."/>
            <person name="Murakami K."/>
            <person name="Yasuda T."/>
            <person name="Iwayanagi T."/>
            <person name="Wagatsuma M."/>
            <person name="Shiratori A."/>
            <person name="Sudo H."/>
            <person name="Hosoiri T."/>
            <person name="Kaku Y."/>
            <person name="Kodaira H."/>
            <person name="Kondo H."/>
            <person name="Sugawara M."/>
            <person name="Takahashi M."/>
            <person name="Kanda K."/>
            <person name="Yokoi T."/>
            <person name="Furuya T."/>
            <person name="Kikkawa E."/>
            <person name="Omura Y."/>
            <person name="Abe K."/>
            <person name="Kamihara K."/>
            <person name="Katsuta N."/>
            <person name="Sato K."/>
            <person name="Tanikawa M."/>
            <person name="Yamazaki M."/>
            <person name="Ninomiya K."/>
            <person name="Ishibashi T."/>
            <person name="Yamashita H."/>
            <person name="Murakawa K."/>
            <person name="Fujimori K."/>
            <person name="Tanai H."/>
            <person name="Kimata M."/>
            <person name="Watanabe M."/>
            <person name="Hiraoka S."/>
            <person name="Chiba Y."/>
            <person name="Ishida S."/>
            <person name="Ono Y."/>
            <person name="Takiguchi S."/>
            <person name="Watanabe S."/>
            <person name="Yosida M."/>
            <person name="Hotuta T."/>
            <person name="Kusano J."/>
            <person name="Kanehori K."/>
            <person name="Takahashi-Fujii A."/>
            <person name="Hara H."/>
            <person name="Tanase T.-O."/>
            <person name="Nomura Y."/>
            <person name="Togiya S."/>
            <person name="Komai F."/>
            <person name="Hara R."/>
            <person name="Takeuchi K."/>
            <person name="Arita M."/>
            <person name="Imose N."/>
            <person name="Musashino K."/>
            <person name="Yuuki H."/>
            <person name="Oshima A."/>
            <person name="Sasaki N."/>
            <person name="Aotsuka S."/>
            <person name="Yoshikawa Y."/>
            <person name="Matsunawa H."/>
            <person name="Ichihara T."/>
            <person name="Shiohata N."/>
            <person name="Sano S."/>
            <person name="Moriya S."/>
            <person name="Momiyama H."/>
            <person name="Satoh N."/>
            <person name="Takami S."/>
            <person name="Terashima Y."/>
            <person name="Suzuki O."/>
            <person name="Nakagawa S."/>
            <person name="Senoh A."/>
            <person name="Mizoguchi H."/>
            <person name="Goto Y."/>
            <person name="Shimizu F."/>
            <person name="Wakebe H."/>
            <person name="Hishigaki H."/>
            <person name="Watanabe T."/>
            <person name="Sugiyama A."/>
            <person name="Takemoto M."/>
            <person name="Kawakami B."/>
            <person name="Yamazaki M."/>
            <person name="Watanabe K."/>
            <person name="Kumagai A."/>
            <person name="Itakura S."/>
            <person name="Fukuzumi Y."/>
            <person name="Fujimori Y."/>
            <person name="Komiyama M."/>
            <person name="Tashiro H."/>
            <person name="Tanigami A."/>
            <person name="Fujiwara T."/>
            <person name="Ono T."/>
            <person name="Yamada K."/>
            <person name="Fujii Y."/>
            <person name="Ozaki K."/>
            <person name="Hirao M."/>
            <person name="Ohmori Y."/>
            <person name="Kawabata A."/>
            <person name="Hikiji T."/>
            <person name="Kobatake N."/>
            <person name="Inagaki H."/>
            <person name="Ikema Y."/>
            <person name="Okamoto S."/>
            <person name="Okitani R."/>
            <person name="Kawakami T."/>
            <person name="Noguchi S."/>
            <person name="Itoh T."/>
            <person name="Shigeta K."/>
            <person name="Senba T."/>
            <person name="Matsumura K."/>
            <person name="Nakajima Y."/>
            <person name="Mizuno T."/>
            <person name="Morinaga M."/>
            <person name="Sasaki M."/>
            <person name="Togashi T."/>
            <person name="Oyama M."/>
            <person name="Hata H."/>
            <person name="Watanabe M."/>
            <person name="Komatsu T."/>
            <person name="Mizushima-Sugano J."/>
            <person name="Satoh T."/>
            <person name="Shirai Y."/>
            <person name="Takahashi Y."/>
            <person name="Nakagawa K."/>
            <person name="Okumura K."/>
            <person name="Nagase T."/>
            <person name="Nomura N."/>
            <person name="Kikuchi H."/>
            <person name="Masuho Y."/>
            <person name="Yamashita R."/>
            <person name="Nakai K."/>
            <person name="Yada T."/>
            <person name="Nakamura Y."/>
            <person name="Ohara O."/>
            <person name="Isogai T."/>
            <person name="Sugano S."/>
        </authorList>
    </citation>
    <scope>NUCLEOTIDE SEQUENCE [LARGE SCALE MRNA]</scope>
</reference>
<reference key="5">
    <citation type="journal article" date="2005" name="Nature">
        <title>Generation and annotation of the DNA sequences of human chromosomes 2 and 4.</title>
        <authorList>
            <person name="Hillier L.W."/>
            <person name="Graves T.A."/>
            <person name="Fulton R.S."/>
            <person name="Fulton L.A."/>
            <person name="Pepin K.H."/>
            <person name="Minx P."/>
            <person name="Wagner-McPherson C."/>
            <person name="Layman D."/>
            <person name="Wylie K."/>
            <person name="Sekhon M."/>
            <person name="Becker M.C."/>
            <person name="Fewell G.A."/>
            <person name="Delehaunty K.D."/>
            <person name="Miner T.L."/>
            <person name="Nash W.E."/>
            <person name="Kremitzki C."/>
            <person name="Oddy L."/>
            <person name="Du H."/>
            <person name="Sun H."/>
            <person name="Bradshaw-Cordum H."/>
            <person name="Ali J."/>
            <person name="Carter J."/>
            <person name="Cordes M."/>
            <person name="Harris A."/>
            <person name="Isak A."/>
            <person name="van Brunt A."/>
            <person name="Nguyen C."/>
            <person name="Du F."/>
            <person name="Courtney L."/>
            <person name="Kalicki J."/>
            <person name="Ozersky P."/>
            <person name="Abbott S."/>
            <person name="Armstrong J."/>
            <person name="Belter E.A."/>
            <person name="Caruso L."/>
            <person name="Cedroni M."/>
            <person name="Cotton M."/>
            <person name="Davidson T."/>
            <person name="Desai A."/>
            <person name="Elliott G."/>
            <person name="Erb T."/>
            <person name="Fronick C."/>
            <person name="Gaige T."/>
            <person name="Haakenson W."/>
            <person name="Haglund K."/>
            <person name="Holmes A."/>
            <person name="Harkins R."/>
            <person name="Kim K."/>
            <person name="Kruchowski S.S."/>
            <person name="Strong C.M."/>
            <person name="Grewal N."/>
            <person name="Goyea E."/>
            <person name="Hou S."/>
            <person name="Levy A."/>
            <person name="Martinka S."/>
            <person name="Mead K."/>
            <person name="McLellan M.D."/>
            <person name="Meyer R."/>
            <person name="Randall-Maher J."/>
            <person name="Tomlinson C."/>
            <person name="Dauphin-Kohlberg S."/>
            <person name="Kozlowicz-Reilly A."/>
            <person name="Shah N."/>
            <person name="Swearengen-Shahid S."/>
            <person name="Snider J."/>
            <person name="Strong J.T."/>
            <person name="Thompson J."/>
            <person name="Yoakum M."/>
            <person name="Leonard S."/>
            <person name="Pearman C."/>
            <person name="Trani L."/>
            <person name="Radionenko M."/>
            <person name="Waligorski J.E."/>
            <person name="Wang C."/>
            <person name="Rock S.M."/>
            <person name="Tin-Wollam A.-M."/>
            <person name="Maupin R."/>
            <person name="Latreille P."/>
            <person name="Wendl M.C."/>
            <person name="Yang S.-P."/>
            <person name="Pohl C."/>
            <person name="Wallis J.W."/>
            <person name="Spieth J."/>
            <person name="Bieri T.A."/>
            <person name="Berkowicz N."/>
            <person name="Nelson J.O."/>
            <person name="Osborne J."/>
            <person name="Ding L."/>
            <person name="Meyer R."/>
            <person name="Sabo A."/>
            <person name="Shotland Y."/>
            <person name="Sinha P."/>
            <person name="Wohldmann P.E."/>
            <person name="Cook L.L."/>
            <person name="Hickenbotham M.T."/>
            <person name="Eldred J."/>
            <person name="Williams D."/>
            <person name="Jones T.A."/>
            <person name="She X."/>
            <person name="Ciccarelli F.D."/>
            <person name="Izaurralde E."/>
            <person name="Taylor J."/>
            <person name="Schmutz J."/>
            <person name="Myers R.M."/>
            <person name="Cox D.R."/>
            <person name="Huang X."/>
            <person name="McPherson J.D."/>
            <person name="Mardis E.R."/>
            <person name="Clifton S.W."/>
            <person name="Warren W.C."/>
            <person name="Chinwalla A.T."/>
            <person name="Eddy S.R."/>
            <person name="Marra M.A."/>
            <person name="Ovcharenko I."/>
            <person name="Furey T.S."/>
            <person name="Miller W."/>
            <person name="Eichler E.E."/>
            <person name="Bork P."/>
            <person name="Suyama M."/>
            <person name="Torrents D."/>
            <person name="Waterston R.H."/>
            <person name="Wilson R.K."/>
        </authorList>
    </citation>
    <scope>NUCLEOTIDE SEQUENCE [LARGE SCALE GENOMIC DNA]</scope>
</reference>
<reference key="6">
    <citation type="submission" date="2005-07" db="EMBL/GenBank/DDBJ databases">
        <authorList>
            <person name="Mural R.J."/>
            <person name="Istrail S."/>
            <person name="Sutton G.G."/>
            <person name="Florea L."/>
            <person name="Halpern A.L."/>
            <person name="Mobarry C.M."/>
            <person name="Lippert R."/>
            <person name="Walenz B."/>
            <person name="Shatkay H."/>
            <person name="Dew I."/>
            <person name="Miller J.R."/>
            <person name="Flanigan M.J."/>
            <person name="Edwards N.J."/>
            <person name="Bolanos R."/>
            <person name="Fasulo D."/>
            <person name="Halldorsson B.V."/>
            <person name="Hannenhalli S."/>
            <person name="Turner R."/>
            <person name="Yooseph S."/>
            <person name="Lu F."/>
            <person name="Nusskern D.R."/>
            <person name="Shue B.C."/>
            <person name="Zheng X.H."/>
            <person name="Zhong F."/>
            <person name="Delcher A.L."/>
            <person name="Huson D.H."/>
            <person name="Kravitz S.A."/>
            <person name="Mouchard L."/>
            <person name="Reinert K."/>
            <person name="Remington K.A."/>
            <person name="Clark A.G."/>
            <person name="Waterman M.S."/>
            <person name="Eichler E.E."/>
            <person name="Adams M.D."/>
            <person name="Hunkapiller M.W."/>
            <person name="Myers E.W."/>
            <person name="Venter J.C."/>
        </authorList>
    </citation>
    <scope>NUCLEOTIDE SEQUENCE [LARGE SCALE GENOMIC DNA]</scope>
</reference>
<reference key="7">
    <citation type="journal article" date="2004" name="Genome Res.">
        <title>The status, quality, and expansion of the NIH full-length cDNA project: the Mammalian Gene Collection (MGC).</title>
        <authorList>
            <consortium name="The MGC Project Team"/>
        </authorList>
    </citation>
    <scope>NUCLEOTIDE SEQUENCE [LARGE SCALE MRNA]</scope>
</reference>
<reference key="8">
    <citation type="journal article" date="1987" name="Nucleic Acids Res.">
        <title>Promoter structure of the human intestinal alkaline phosphatase gene.</title>
        <authorList>
            <person name="Millan J.L."/>
        </authorList>
    </citation>
    <scope>NUCLEOTIDE SEQUENCE [GENOMIC DNA] OF 1-100</scope>
</reference>
<reference key="9">
    <citation type="journal article" date="1987" name="Gene">
        <title>Two gene duplication events in the evolution of the human heat-stable alkaline phosphatases.</title>
        <authorList>
            <person name="Knoll B.J."/>
            <person name="Rothblum K.N."/>
            <person name="Longley M."/>
        </authorList>
    </citation>
    <scope>NUCLEOTIDE SEQUENCE [GENOMIC DNA] OF 1-73</scope>
</reference>
<reference key="10">
    <citation type="journal article" date="1986" name="Proc. Natl. Acad. Sci. U.S.A.">
        <title>Partial sequencing of human adult, human fetal, and bovine intestinal alkaline phosphatases: comparison with the human placental and liver isozymes.</title>
        <authorList>
            <person name="Hua J.-C."/>
            <person name="Berger J."/>
            <person name="Pan Y.C.E."/>
            <person name="Hulmes J.D."/>
            <person name="Udenfriend S."/>
        </authorList>
    </citation>
    <scope>PROTEIN SEQUENCE OF 20-58</scope>
</reference>
<reference key="11">
    <citation type="journal article" date="1992" name="Clin. Chem.">
        <title>Chemical nature of intestinal-type alkaline phosphatase in human kidney.</title>
        <authorList>
            <person name="Nishihara Y."/>
            <person name="Hayashi Y."/>
            <person name="Adachi T."/>
            <person name="Koyama I."/>
            <person name="Stigbrand T."/>
            <person name="Hirano K."/>
        </authorList>
    </citation>
    <scope>PROTEIN SEQUENCE OF 20-49</scope>
</reference>
<reference key="12">
    <citation type="journal article" date="2010" name="Sci. Signal.">
        <title>Quantitative phosphoproteomics reveals widespread full phosphorylation site occupancy during mitosis.</title>
        <authorList>
            <person name="Olsen J.V."/>
            <person name="Vermeulen M."/>
            <person name="Santamaria A."/>
            <person name="Kumar C."/>
            <person name="Miller M.L."/>
            <person name="Jensen L.J."/>
            <person name="Gnad F."/>
            <person name="Cox J."/>
            <person name="Jensen T.S."/>
            <person name="Nigg E.A."/>
            <person name="Brunak S."/>
            <person name="Mann M."/>
        </authorList>
    </citation>
    <scope>IDENTIFICATION BY MASS SPECTROMETRY [LARGE SCALE ANALYSIS]</scope>
    <source>
        <tissue>Cervix carcinoma</tissue>
    </source>
</reference>
<protein>
    <recommendedName>
        <fullName>Intestinal-type alkaline phosphatase</fullName>
        <shortName>IAP</shortName>
        <shortName>Intestinal alkaline phosphatase</shortName>
        <ecNumber>3.1.3.1</ecNumber>
    </recommendedName>
</protein>
<accession>P09923</accession>
<accession>B2R7Y4</accession>
<accession>Q53S80</accession>
<accession>Q9UBV5</accession>
<accession>Q9UCL2</accession>
<gene>
    <name type="primary">ALPI</name>
</gene>
<sequence>MQGPWVLLLLGLRLQLSLGVIPAEEENPAFWNRQAAEALDAAKKLQPIQKVAKNLILFLGDGLGVPTVTATRILKGQKNGKLGPETPLAMDRFPYLALSKTYNVDRQVPDSAATATAYLCGVKANFQTIGLSAAARFNQCNTTRGNEVISVMNRAKQAGKSVGVVTTTRVQHASPAGTYAHTVNRNWYSDADMPASARQEGCQDIATQLISNMDIDVILGGGRKYMFPMGTPDPEYPADASQNGIRLDGKNLVQEWLAKHQGAWYVWNRTELMQASLDQSVTHLMGLFEPGDTKYEIHRDPTLDPSLMEMTEAALRLLSRNPRGFYLFVEGGRIDHGHHEGVAYQALTEAVMFDDAIERAGQLTSEEDTLTLVTADHSHVFSFGGYTLRGSSIFGLAPSKAQDSKAYTSILYGNGPGYVFNSGVRPDVNESESGSPDYQQQAAVPLSSETHGGEDVAVFARGPQAHLVHGVQEQSFVAHVMAFAACLEPYTACDLAPPACTTDAAHPVAASLPLLAGTLLLLGASAAP</sequence>
<keyword id="KW-0106">Calcium</keyword>
<keyword id="KW-1003">Cell membrane</keyword>
<keyword id="KW-0903">Direct protein sequencing</keyword>
<keyword id="KW-1015">Disulfide bond</keyword>
<keyword id="KW-0325">Glycoprotein</keyword>
<keyword id="KW-0336">GPI-anchor</keyword>
<keyword id="KW-0378">Hydrolase</keyword>
<keyword id="KW-0449">Lipoprotein</keyword>
<keyword id="KW-0460">Magnesium</keyword>
<keyword id="KW-0472">Membrane</keyword>
<keyword id="KW-0479">Metal-binding</keyword>
<keyword id="KW-1267">Proteomics identification</keyword>
<keyword id="KW-1185">Reference proteome</keyword>
<keyword id="KW-0732">Signal</keyword>
<keyword id="KW-0862">Zinc</keyword>
<evidence type="ECO:0000250" key="1">
    <source>
        <dbReference type="UniProtKB" id="P05186"/>
    </source>
</evidence>
<evidence type="ECO:0000250" key="2">
    <source>
        <dbReference type="UniProtKB" id="P15693"/>
    </source>
</evidence>
<evidence type="ECO:0000255" key="3"/>
<evidence type="ECO:0000255" key="4">
    <source>
        <dbReference type="PROSITE-ProRule" id="PRU10042"/>
    </source>
</evidence>
<evidence type="ECO:0000269" key="5">
    <source>
    </source>
</evidence>
<evidence type="ECO:0000269" key="6">
    <source>
    </source>
</evidence>
<evidence type="ECO:0000305" key="7"/>
<name>PPBI_HUMAN</name>
<feature type="signal peptide" evidence="5 6">
    <location>
        <begin position="1"/>
        <end position="19"/>
    </location>
</feature>
<feature type="chain" id="PRO_0000024037" description="Intestinal-type alkaline phosphatase">
    <location>
        <begin position="20"/>
        <end position="503"/>
    </location>
</feature>
<feature type="propeptide" id="PRO_0000024038" description="Removed in mature form" evidence="3">
    <location>
        <begin position="504"/>
        <end position="528"/>
    </location>
</feature>
<feature type="active site" description="Phosphoserine intermediate" evidence="4">
    <location>
        <position position="111"/>
    </location>
</feature>
<feature type="binding site" evidence="2">
    <location>
        <position position="61"/>
    </location>
    <ligand>
        <name>Mg(2+)</name>
        <dbReference type="ChEBI" id="CHEBI:18420"/>
    </ligand>
</feature>
<feature type="binding site" evidence="2">
    <location>
        <position position="61"/>
    </location>
    <ligand>
        <name>Zn(2+)</name>
        <dbReference type="ChEBI" id="CHEBI:29105"/>
        <label>1</label>
    </ligand>
</feature>
<feature type="binding site" evidence="2">
    <location>
        <position position="111"/>
    </location>
    <ligand>
        <name>Zn(2+)</name>
        <dbReference type="ChEBI" id="CHEBI:29105"/>
        <label>1</label>
    </ligand>
</feature>
<feature type="binding site" evidence="2">
    <location>
        <position position="174"/>
    </location>
    <ligand>
        <name>Mg(2+)</name>
        <dbReference type="ChEBI" id="CHEBI:18420"/>
    </ligand>
</feature>
<feature type="binding site" evidence="1">
    <location>
        <position position="235"/>
    </location>
    <ligand>
        <name>Ca(2+)</name>
        <dbReference type="ChEBI" id="CHEBI:29108"/>
    </ligand>
</feature>
<feature type="binding site" evidence="1">
    <location>
        <position position="288"/>
    </location>
    <ligand>
        <name>Ca(2+)</name>
        <dbReference type="ChEBI" id="CHEBI:29108"/>
    </ligand>
</feature>
<feature type="binding site" evidence="1">
    <location>
        <position position="289"/>
    </location>
    <ligand>
        <name>Ca(2+)</name>
        <dbReference type="ChEBI" id="CHEBI:29108"/>
    </ligand>
</feature>
<feature type="binding site" evidence="1">
    <location>
        <position position="304"/>
    </location>
    <ligand>
        <name>Ca(2+)</name>
        <dbReference type="ChEBI" id="CHEBI:29108"/>
    </ligand>
</feature>
<feature type="binding site" evidence="2">
    <location>
        <position position="330"/>
    </location>
    <ligand>
        <name>Mg(2+)</name>
        <dbReference type="ChEBI" id="CHEBI:18420"/>
    </ligand>
</feature>
<feature type="binding site" evidence="2">
    <location>
        <position position="335"/>
    </location>
    <ligand>
        <name>Zn(2+)</name>
        <dbReference type="ChEBI" id="CHEBI:29105"/>
        <label>2</label>
    </ligand>
</feature>
<feature type="binding site" evidence="2">
    <location>
        <position position="339"/>
    </location>
    <ligand>
        <name>Zn(2+)</name>
        <dbReference type="ChEBI" id="CHEBI:29105"/>
        <label>2</label>
    </ligand>
</feature>
<feature type="binding site" evidence="2">
    <location>
        <position position="376"/>
    </location>
    <ligand>
        <name>Zn(2+)</name>
        <dbReference type="ChEBI" id="CHEBI:29105"/>
        <label>1</label>
    </ligand>
</feature>
<feature type="binding site" evidence="2">
    <location>
        <position position="377"/>
    </location>
    <ligand>
        <name>Zn(2+)</name>
        <dbReference type="ChEBI" id="CHEBI:29105"/>
        <label>1</label>
    </ligand>
</feature>
<feature type="binding site" evidence="2">
    <location>
        <position position="451"/>
    </location>
    <ligand>
        <name>Zn(2+)</name>
        <dbReference type="ChEBI" id="CHEBI:29105"/>
        <label>2</label>
    </ligand>
</feature>
<feature type="lipid moiety-binding region" description="GPI-anchor amidated aspartate" evidence="3">
    <location>
        <position position="503"/>
    </location>
</feature>
<feature type="glycosylation site" description="N-linked (GlcNAc...) asparagine" evidence="3">
    <location>
        <position position="141"/>
    </location>
</feature>
<feature type="glycosylation site" description="N-linked (GlcNAc...) asparagine" evidence="3">
    <location>
        <position position="268"/>
    </location>
</feature>
<feature type="glycosylation site" description="N-linked (GlcNAc...) asparagine" evidence="3">
    <location>
        <position position="429"/>
    </location>
</feature>
<feature type="disulfide bond" evidence="2">
    <location>
        <begin position="140"/>
        <end position="202"/>
    </location>
</feature>
<feature type="disulfide bond" evidence="2">
    <location>
        <begin position="486"/>
        <end position="493"/>
    </location>
</feature>
<feature type="sequence variant" id="VAR_050524" description="In dbSNP:rs7559279.">
    <original>R</original>
    <variation>H</variation>
    <location>
        <position position="144"/>
    </location>
</feature>
<feature type="sequence variant" id="VAR_011816" description="In dbSNP:rs1047223.">
    <original>H</original>
    <variation>L</variation>
    <location>
        <position position="298"/>
    </location>
</feature>
<feature type="sequence conflict" description="In Ref. 2; AAA51703." evidence="7" ref="2">
    <original>L</original>
    <variation>V</variation>
    <location>
        <position position="347"/>
    </location>
</feature>
<feature type="sequence conflict" description="In Ref. 1; AAA51704." evidence="7" ref="1">
    <original>I</original>
    <variation>T</variation>
    <location>
        <position position="410"/>
    </location>
</feature>
<feature type="sequence conflict" description="In Ref. 2; AAA51703." evidence="7" ref="2">
    <original>P</original>
    <variation>L</variation>
    <location>
        <position position="497"/>
    </location>
</feature>
<organism>
    <name type="scientific">Homo sapiens</name>
    <name type="common">Human</name>
    <dbReference type="NCBI Taxonomy" id="9606"/>
    <lineage>
        <taxon>Eukaryota</taxon>
        <taxon>Metazoa</taxon>
        <taxon>Chordata</taxon>
        <taxon>Craniata</taxon>
        <taxon>Vertebrata</taxon>
        <taxon>Euteleostomi</taxon>
        <taxon>Mammalia</taxon>
        <taxon>Eutheria</taxon>
        <taxon>Euarchontoglires</taxon>
        <taxon>Primates</taxon>
        <taxon>Haplorrhini</taxon>
        <taxon>Catarrhini</taxon>
        <taxon>Hominidae</taxon>
        <taxon>Homo</taxon>
    </lineage>
</organism>
<comment type="function">
    <text evidence="2">Alkaline phosphatase that can hydrolyze various phosphate compounds.</text>
</comment>
<comment type="catalytic activity">
    <reaction evidence="2 4">
        <text>a phosphate monoester + H2O = an alcohol + phosphate</text>
        <dbReference type="Rhea" id="RHEA:15017"/>
        <dbReference type="ChEBI" id="CHEBI:15377"/>
        <dbReference type="ChEBI" id="CHEBI:30879"/>
        <dbReference type="ChEBI" id="CHEBI:43474"/>
        <dbReference type="ChEBI" id="CHEBI:67140"/>
        <dbReference type="EC" id="3.1.3.1"/>
    </reaction>
</comment>
<comment type="cofactor">
    <cofactor evidence="2">
        <name>Mg(2+)</name>
        <dbReference type="ChEBI" id="CHEBI:18420"/>
    </cofactor>
    <text evidence="2">Binds 1 Mg(2+) ion.</text>
</comment>
<comment type="cofactor">
    <cofactor evidence="2">
        <name>Zn(2+)</name>
        <dbReference type="ChEBI" id="CHEBI:29105"/>
    </cofactor>
    <text evidence="2">Binds 2 Zn(2+) ions.</text>
</comment>
<comment type="cofactor">
    <cofactor evidence="1">
        <name>Ca(2+)</name>
        <dbReference type="ChEBI" id="CHEBI:29108"/>
    </cofactor>
</comment>
<comment type="subunit">
    <text evidence="2">Homodimer.</text>
</comment>
<comment type="interaction">
    <interactant intactId="EBI-1052631">
        <id>P09923</id>
    </interactant>
    <interactant intactId="EBI-10171774">
        <id>P60410</id>
        <label>KRTAP10-8</label>
    </interactant>
    <organismsDiffer>false</organismsDiffer>
    <experiments>3</experiments>
</comment>
<comment type="interaction">
    <interactant intactId="EBI-1052631">
        <id>P09923</id>
    </interactant>
    <interactant intactId="EBI-10172052">
        <id>P60411</id>
        <label>KRTAP10-9</label>
    </interactant>
    <organismsDiffer>false</organismsDiffer>
    <experiments>3</experiments>
</comment>
<comment type="interaction">
    <interactant intactId="EBI-1052631">
        <id>P09923</id>
    </interactant>
    <interactant intactId="EBI-945833">
        <id>Q7Z3S9</id>
        <label>NOTCH2NLA</label>
    </interactant>
    <organismsDiffer>false</organismsDiffer>
    <experiments>4</experiments>
</comment>
<comment type="subcellular location">
    <subcellularLocation>
        <location evidence="2">Cell membrane</location>
        <topology evidence="2">Lipid-anchor</topology>
        <topology evidence="2">GPI-anchor</topology>
    </subcellularLocation>
</comment>
<comment type="miscellaneous">
    <text>In most mammals there are four different isozymes: placental (ALPP), germ cell (ALPG), intestinal (ALPI) and tissue non-specific (liver/bone/kidney) (ALPL/TNAP).</text>
</comment>
<comment type="similarity">
    <text evidence="7">Belongs to the alkaline phosphatase family.</text>
</comment>
<comment type="online information" name="Wikipedia">
    <link uri="https://en.wikipedia.org/wiki/Alkaline_phosphatase"/>
    <text>Alkaline phosphatase entry</text>
</comment>
<dbReference type="EC" id="3.1.3.1"/>
<dbReference type="EMBL" id="M15694">
    <property type="protein sequence ID" value="AAA51703.1"/>
    <property type="molecule type" value="mRNA"/>
</dbReference>
<dbReference type="EMBL" id="M31008">
    <property type="protein sequence ID" value="AAA51704.1"/>
    <property type="molecule type" value="mRNA"/>
</dbReference>
<dbReference type="EMBL" id="J03930">
    <property type="protein sequence ID" value="AAA98617.1"/>
    <property type="molecule type" value="Genomic_DNA"/>
</dbReference>
<dbReference type="EMBL" id="AK313163">
    <property type="protein sequence ID" value="BAG35981.1"/>
    <property type="molecule type" value="mRNA"/>
</dbReference>
<dbReference type="EMBL" id="AC068134">
    <property type="protein sequence ID" value="AAY24089.1"/>
    <property type="molecule type" value="Genomic_DNA"/>
</dbReference>
<dbReference type="EMBL" id="CH471063">
    <property type="protein sequence ID" value="EAW70997.1"/>
    <property type="molecule type" value="Genomic_DNA"/>
</dbReference>
<dbReference type="EMBL" id="BC132678">
    <property type="protein sequence ID" value="AAI32679.1"/>
    <property type="molecule type" value="mRNA"/>
</dbReference>
<dbReference type="EMBL" id="Y00512">
    <property type="protein sequence ID" value="CAA68564.1"/>
    <property type="molecule type" value="Genomic_DNA"/>
</dbReference>
<dbReference type="EMBL" id="M19161">
    <property type="protein sequence ID" value="AAA51705.1"/>
    <property type="molecule type" value="Genomic_DNA"/>
</dbReference>
<dbReference type="CCDS" id="CCDS2492.1"/>
<dbReference type="PIR" id="A31073">
    <property type="entry name" value="PAHUI"/>
</dbReference>
<dbReference type="RefSeq" id="NP_001622.2">
    <property type="nucleotide sequence ID" value="NM_001631.5"/>
</dbReference>
<dbReference type="SMR" id="P09923"/>
<dbReference type="BioGRID" id="106749">
    <property type="interactions" value="93"/>
</dbReference>
<dbReference type="FunCoup" id="P09923">
    <property type="interactions" value="170"/>
</dbReference>
<dbReference type="IntAct" id="P09923">
    <property type="interactions" value="58"/>
</dbReference>
<dbReference type="MINT" id="P09923"/>
<dbReference type="STRING" id="9606.ENSP00000295463"/>
<dbReference type="BindingDB" id="P09923"/>
<dbReference type="ChEMBL" id="CHEMBL5573"/>
<dbReference type="DrugBank" id="DB12816">
    <property type="generic name" value="Terpinen-4-ol"/>
</dbReference>
<dbReference type="DrugBank" id="DB16349">
    <property type="generic name" value="Vicagrel"/>
</dbReference>
<dbReference type="DrugCentral" id="P09923"/>
<dbReference type="DEPOD" id="ALPI"/>
<dbReference type="GlyConnect" id="11">
    <property type="glycosylation" value="9 N-Linked glycans"/>
</dbReference>
<dbReference type="GlyCosmos" id="P09923">
    <property type="glycosylation" value="3 sites, 17 glycans"/>
</dbReference>
<dbReference type="GlyGen" id="P09923">
    <property type="glycosylation" value="4 sites, 32 N-linked glycans (3 sites), 1 O-linked glycan (1 site)"/>
</dbReference>
<dbReference type="iPTMnet" id="P09923"/>
<dbReference type="PhosphoSitePlus" id="P09923"/>
<dbReference type="BioMuta" id="ALPI"/>
<dbReference type="DMDM" id="130744"/>
<dbReference type="jPOST" id="P09923"/>
<dbReference type="MassIVE" id="P09923"/>
<dbReference type="PaxDb" id="9606-ENSP00000295463"/>
<dbReference type="PeptideAtlas" id="P09923"/>
<dbReference type="ProteomicsDB" id="52281"/>
<dbReference type="ABCD" id="P09923">
    <property type="antibodies" value="1 sequenced antibody"/>
</dbReference>
<dbReference type="Antibodypedia" id="20217">
    <property type="antibodies" value="768 antibodies from 34 providers"/>
</dbReference>
<dbReference type="DNASU" id="248"/>
<dbReference type="Ensembl" id="ENST00000295463.4">
    <property type="protein sequence ID" value="ENSP00000295463.3"/>
    <property type="gene ID" value="ENSG00000163295.5"/>
</dbReference>
<dbReference type="GeneID" id="248"/>
<dbReference type="KEGG" id="hsa:248"/>
<dbReference type="MANE-Select" id="ENST00000295463.4">
    <property type="protein sequence ID" value="ENSP00000295463.3"/>
    <property type="RefSeq nucleotide sequence ID" value="NM_001631.5"/>
    <property type="RefSeq protein sequence ID" value="NP_001622.2"/>
</dbReference>
<dbReference type="UCSC" id="uc002vst.4">
    <property type="organism name" value="human"/>
</dbReference>
<dbReference type="AGR" id="HGNC:437"/>
<dbReference type="CTD" id="248"/>
<dbReference type="DisGeNET" id="248"/>
<dbReference type="GeneCards" id="ALPI"/>
<dbReference type="HGNC" id="HGNC:437">
    <property type="gene designation" value="ALPI"/>
</dbReference>
<dbReference type="HPA" id="ENSG00000163295">
    <property type="expression patterns" value="Tissue enriched (intestine)"/>
</dbReference>
<dbReference type="MalaCards" id="ALPI"/>
<dbReference type="MIM" id="171740">
    <property type="type" value="gene"/>
</dbReference>
<dbReference type="neXtProt" id="NX_P09923"/>
<dbReference type="OpenTargets" id="ENSG00000163295"/>
<dbReference type="Orphanet" id="597887">
    <property type="disease" value="ALPI-related inflammatory bowel disease"/>
</dbReference>
<dbReference type="PharmGKB" id="PA24728"/>
<dbReference type="VEuPathDB" id="HostDB:ENSG00000163295"/>
<dbReference type="eggNOG" id="KOG4126">
    <property type="taxonomic scope" value="Eukaryota"/>
</dbReference>
<dbReference type="GeneTree" id="ENSGT00950000183063"/>
<dbReference type="HOGENOM" id="CLU_008539_4_0_1"/>
<dbReference type="InParanoid" id="P09923"/>
<dbReference type="OMA" id="HEGLAYH"/>
<dbReference type="OrthoDB" id="5818554at2759"/>
<dbReference type="PAN-GO" id="P09923">
    <property type="GO annotations" value="3 GO annotations based on evolutionary models"/>
</dbReference>
<dbReference type="PhylomeDB" id="P09923"/>
<dbReference type="TreeFam" id="TF323513"/>
<dbReference type="PathwayCommons" id="P09923"/>
<dbReference type="Reactome" id="R-HSA-1483166">
    <property type="pathway name" value="Synthesis of PA"/>
</dbReference>
<dbReference type="Reactome" id="R-HSA-163125">
    <property type="pathway name" value="Post-translational modification: synthesis of GPI-anchored proteins"/>
</dbReference>
<dbReference type="Reactome" id="R-HSA-8935690">
    <property type="pathway name" value="Digestion"/>
</dbReference>
<dbReference type="SABIO-RK" id="P09923"/>
<dbReference type="SignaLink" id="P09923"/>
<dbReference type="BioGRID-ORCS" id="248">
    <property type="hits" value="12 hits in 1161 CRISPR screens"/>
</dbReference>
<dbReference type="ChiTaRS" id="ALPI">
    <property type="organism name" value="human"/>
</dbReference>
<dbReference type="GeneWiki" id="ALPI"/>
<dbReference type="GenomeRNAi" id="248"/>
<dbReference type="Pharos" id="P09923">
    <property type="development level" value="Tchem"/>
</dbReference>
<dbReference type="PRO" id="PR:P09923"/>
<dbReference type="Proteomes" id="UP000005640">
    <property type="component" value="Chromosome 2"/>
</dbReference>
<dbReference type="RNAct" id="P09923">
    <property type="molecule type" value="protein"/>
</dbReference>
<dbReference type="Bgee" id="ENSG00000163295">
    <property type="expression patterns" value="Expressed in jejunal mucosa and 27 other cell types or tissues"/>
</dbReference>
<dbReference type="ExpressionAtlas" id="P09923">
    <property type="expression patterns" value="baseline and differential"/>
</dbReference>
<dbReference type="GO" id="GO:0005576">
    <property type="term" value="C:extracellular region"/>
    <property type="evidence" value="ECO:0000304"/>
    <property type="project" value="Reactome"/>
</dbReference>
<dbReference type="GO" id="GO:0005886">
    <property type="term" value="C:plasma membrane"/>
    <property type="evidence" value="ECO:0000314"/>
    <property type="project" value="HPA"/>
</dbReference>
<dbReference type="GO" id="GO:0098552">
    <property type="term" value="C:side of membrane"/>
    <property type="evidence" value="ECO:0007669"/>
    <property type="project" value="UniProtKB-KW"/>
</dbReference>
<dbReference type="GO" id="GO:0004035">
    <property type="term" value="F:alkaline phosphatase activity"/>
    <property type="evidence" value="ECO:0000250"/>
    <property type="project" value="UniProtKB"/>
</dbReference>
<dbReference type="GO" id="GO:0000287">
    <property type="term" value="F:magnesium ion binding"/>
    <property type="evidence" value="ECO:0000250"/>
    <property type="project" value="UniProtKB"/>
</dbReference>
<dbReference type="GO" id="GO:0002020">
    <property type="term" value="F:protease binding"/>
    <property type="evidence" value="ECO:0000353"/>
    <property type="project" value="ParkinsonsUK-UCL"/>
</dbReference>
<dbReference type="GO" id="GO:0008270">
    <property type="term" value="F:zinc ion binding"/>
    <property type="evidence" value="ECO:0000250"/>
    <property type="project" value="UniProtKB"/>
</dbReference>
<dbReference type="GO" id="GO:0016311">
    <property type="term" value="P:dephosphorylation"/>
    <property type="evidence" value="ECO:0000250"/>
    <property type="project" value="UniProtKB"/>
</dbReference>
<dbReference type="CDD" id="cd16012">
    <property type="entry name" value="ALP"/>
    <property type="match status" value="1"/>
</dbReference>
<dbReference type="FunFam" id="3.40.720.10:FF:000008">
    <property type="entry name" value="Alkaline phosphatase"/>
    <property type="match status" value="1"/>
</dbReference>
<dbReference type="Gene3D" id="3.40.720.10">
    <property type="entry name" value="Alkaline Phosphatase, subunit A"/>
    <property type="match status" value="1"/>
</dbReference>
<dbReference type="InterPro" id="IPR001952">
    <property type="entry name" value="Alkaline_phosphatase"/>
</dbReference>
<dbReference type="InterPro" id="IPR018299">
    <property type="entry name" value="Alkaline_phosphatase_AS"/>
</dbReference>
<dbReference type="InterPro" id="IPR017850">
    <property type="entry name" value="Alkaline_phosphatase_core_sf"/>
</dbReference>
<dbReference type="PANTHER" id="PTHR11596">
    <property type="entry name" value="ALKALINE PHOSPHATASE"/>
    <property type="match status" value="1"/>
</dbReference>
<dbReference type="PANTHER" id="PTHR11596:SF30">
    <property type="entry name" value="INTESTINAL-TYPE ALKALINE PHOSPHATASE"/>
    <property type="match status" value="1"/>
</dbReference>
<dbReference type="Pfam" id="PF00245">
    <property type="entry name" value="Alk_phosphatase"/>
    <property type="match status" value="1"/>
</dbReference>
<dbReference type="PRINTS" id="PR00113">
    <property type="entry name" value="ALKPHPHTASE"/>
</dbReference>
<dbReference type="SMART" id="SM00098">
    <property type="entry name" value="alkPPc"/>
    <property type="match status" value="1"/>
</dbReference>
<dbReference type="SUPFAM" id="SSF53649">
    <property type="entry name" value="Alkaline phosphatase-like"/>
    <property type="match status" value="1"/>
</dbReference>
<dbReference type="PROSITE" id="PS00123">
    <property type="entry name" value="ALKALINE_PHOSPHATASE"/>
    <property type="match status" value="1"/>
</dbReference>